<sequence length="419" mass="45482">MRAEIIAVGTEILTGQIVNTNAQFLSEKMAELGIDIYFQTAVGDNEERLLSLLDIASQRSQLVILCGGLGPTEDDLTKQTLAKFLGKSLTVDLLASRKLDRFFASRPQFARTPNNERQAQLVEGSIPLQNLTGLAVGGIVTSKGVQYMVLPGPPSELKPMVMEQVVPILSNNGTKLYSRVLRFFGIGESQLVTILEDIIKNQTDPTIAPYAKVGEVTLRLSTKAENQDEADFKLDSLEKEILALKTLDNRKLKDLLYGYGDNNSMARTVLELLKVQNKTITAAESLTAGLFQSQLAEFSGASQVFNGGFTTYSMEAKSQLLGIPKKKLQEYGVVSHFTAEAMAQQARQLLKADFGIGLTGVAGPDELEGYPAGTVFIGIATPEGVSSIKVSIGGKSRSDVRHISTLHAFDLVRRALLKI</sequence>
<feature type="chain" id="PRO_0000156775" description="Putative competence-damage inducible protein">
    <location>
        <begin position="1"/>
        <end position="419"/>
    </location>
</feature>
<name>CINA_STRA3</name>
<reference key="1">
    <citation type="journal article" date="2002" name="Mol. Microbiol.">
        <title>Genome sequence of Streptococcus agalactiae, a pathogen causing invasive neonatal disease.</title>
        <authorList>
            <person name="Glaser P."/>
            <person name="Rusniok C."/>
            <person name="Buchrieser C."/>
            <person name="Chevalier F."/>
            <person name="Frangeul L."/>
            <person name="Msadek T."/>
            <person name="Zouine M."/>
            <person name="Couve E."/>
            <person name="Lalioui L."/>
            <person name="Poyart C."/>
            <person name="Trieu-Cuot P."/>
            <person name="Kunst F."/>
        </authorList>
    </citation>
    <scope>NUCLEOTIDE SEQUENCE [LARGE SCALE GENOMIC DNA]</scope>
    <source>
        <strain>NEM316</strain>
    </source>
</reference>
<accession>Q8E2R9</accession>
<comment type="similarity">
    <text evidence="1">Belongs to the CinA family.</text>
</comment>
<organism>
    <name type="scientific">Streptococcus agalactiae serotype III (strain NEM316)</name>
    <dbReference type="NCBI Taxonomy" id="211110"/>
    <lineage>
        <taxon>Bacteria</taxon>
        <taxon>Bacillati</taxon>
        <taxon>Bacillota</taxon>
        <taxon>Bacilli</taxon>
        <taxon>Lactobacillales</taxon>
        <taxon>Streptococcaceae</taxon>
        <taxon>Streptococcus</taxon>
    </lineage>
</organism>
<proteinExistence type="inferred from homology"/>
<dbReference type="EMBL" id="AL766856">
    <property type="protein sequence ID" value="CAD47707.1"/>
    <property type="molecule type" value="Genomic_DNA"/>
</dbReference>
<dbReference type="RefSeq" id="WP_001200977.1">
    <property type="nucleotide sequence ID" value="NC_004368.1"/>
</dbReference>
<dbReference type="SMR" id="Q8E2R9"/>
<dbReference type="KEGG" id="san:gbs2048"/>
<dbReference type="eggNOG" id="COG1058">
    <property type="taxonomic scope" value="Bacteria"/>
</dbReference>
<dbReference type="eggNOG" id="COG1546">
    <property type="taxonomic scope" value="Bacteria"/>
</dbReference>
<dbReference type="HOGENOM" id="CLU_030805_9_3_9"/>
<dbReference type="Proteomes" id="UP000000823">
    <property type="component" value="Chromosome"/>
</dbReference>
<dbReference type="CDD" id="cd00885">
    <property type="entry name" value="cinA"/>
    <property type="match status" value="1"/>
</dbReference>
<dbReference type="Gene3D" id="3.30.70.2860">
    <property type="match status" value="1"/>
</dbReference>
<dbReference type="Gene3D" id="3.90.950.20">
    <property type="entry name" value="CinA-like"/>
    <property type="match status" value="1"/>
</dbReference>
<dbReference type="Gene3D" id="3.40.980.10">
    <property type="entry name" value="MoaB/Mog-like domain"/>
    <property type="match status" value="1"/>
</dbReference>
<dbReference type="HAMAP" id="MF_00226_B">
    <property type="entry name" value="CinA_B"/>
    <property type="match status" value="1"/>
</dbReference>
<dbReference type="InterPro" id="IPR050101">
    <property type="entry name" value="CinA"/>
</dbReference>
<dbReference type="InterPro" id="IPR036653">
    <property type="entry name" value="CinA-like_C"/>
</dbReference>
<dbReference type="InterPro" id="IPR008136">
    <property type="entry name" value="CinA_C"/>
</dbReference>
<dbReference type="InterPro" id="IPR041424">
    <property type="entry name" value="CinA_KH"/>
</dbReference>
<dbReference type="InterPro" id="IPR008135">
    <property type="entry name" value="Competence-induced_CinA"/>
</dbReference>
<dbReference type="InterPro" id="IPR036425">
    <property type="entry name" value="MoaB/Mog-like_dom_sf"/>
</dbReference>
<dbReference type="InterPro" id="IPR001453">
    <property type="entry name" value="MoaB/Mog_dom"/>
</dbReference>
<dbReference type="NCBIfam" id="TIGR00200">
    <property type="entry name" value="cinA_nterm"/>
    <property type="match status" value="1"/>
</dbReference>
<dbReference type="NCBIfam" id="TIGR00199">
    <property type="entry name" value="PncC_domain"/>
    <property type="match status" value="1"/>
</dbReference>
<dbReference type="NCBIfam" id="NF001813">
    <property type="entry name" value="PRK00549.1"/>
    <property type="match status" value="1"/>
</dbReference>
<dbReference type="PANTHER" id="PTHR13939">
    <property type="entry name" value="NICOTINAMIDE-NUCLEOTIDE AMIDOHYDROLASE PNCC"/>
    <property type="match status" value="1"/>
</dbReference>
<dbReference type="PANTHER" id="PTHR13939:SF0">
    <property type="entry name" value="NMN AMIDOHYDROLASE-LIKE PROTEIN YFAY"/>
    <property type="match status" value="1"/>
</dbReference>
<dbReference type="Pfam" id="PF02464">
    <property type="entry name" value="CinA"/>
    <property type="match status" value="1"/>
</dbReference>
<dbReference type="Pfam" id="PF18146">
    <property type="entry name" value="CinA_KH"/>
    <property type="match status" value="1"/>
</dbReference>
<dbReference type="Pfam" id="PF00994">
    <property type="entry name" value="MoCF_biosynth"/>
    <property type="match status" value="1"/>
</dbReference>
<dbReference type="PIRSF" id="PIRSF006728">
    <property type="entry name" value="CinA"/>
    <property type="match status" value="1"/>
</dbReference>
<dbReference type="SMART" id="SM00852">
    <property type="entry name" value="MoCF_biosynth"/>
    <property type="match status" value="1"/>
</dbReference>
<dbReference type="SUPFAM" id="SSF142433">
    <property type="entry name" value="CinA-like"/>
    <property type="match status" value="1"/>
</dbReference>
<dbReference type="SUPFAM" id="SSF53218">
    <property type="entry name" value="Molybdenum cofactor biosynthesis proteins"/>
    <property type="match status" value="1"/>
</dbReference>
<protein>
    <recommendedName>
        <fullName evidence="1">Putative competence-damage inducible protein</fullName>
    </recommendedName>
</protein>
<evidence type="ECO:0000255" key="1">
    <source>
        <dbReference type="HAMAP-Rule" id="MF_00226"/>
    </source>
</evidence>
<gene>
    <name evidence="1" type="primary">cinA</name>
    <name type="ordered locus">gbs2048</name>
</gene>